<sequence>MSDIEIARAATKKPIQQIGATLGIGADDLLPYGHDKAKVSQSFITSVQDRPNGKLILVTAINPTPAGEGKTTTTVGLGDGLNRIGKKACVCIREASLGPNFGMKGGAAGGGHAQVIPMEDMNLHFTGDFHAITSAHSLLSAMIDNHIYWGNELEIDIRRVTWRRVVDMNDRALRQITASLGGVANGFPREAGFDITVASEVMAILCLARDLKDLEQRLGDMIVAYRRDRSPVYCRDIKAEGAMTVLLKDAMQPNLVQTLENNPAFVHGGPFANIAHGCNSVIATTTALKLADFVVTEAGFGADLGAEKFMNIKCRKAGLAPDCVVLVATVRAMKMNGGVAKADLGAENVAAVQAGCANLGRHIGNLQGFGVPVVVAINHFVTDTEAEIQAVKDYVAGQGAEAILSRHWELGSEGSAALATRVAEIAESGASQFSPLYPDAMPLLEKIETIAKRIYHAEKVIADNKIVDQLKLWEEQGYGHLPICMAKTQYSFSTDPNERGAPTGHAIPVREVRLSAGAGFVVVVCGEIMTMPGLPRVPSAEHIRLNDAGEVEGLF</sequence>
<keyword id="KW-0067">ATP-binding</keyword>
<keyword id="KW-0436">Ligase</keyword>
<keyword id="KW-0547">Nucleotide-binding</keyword>
<keyword id="KW-0554">One-carbon metabolism</keyword>
<keyword id="KW-1185">Reference proteome</keyword>
<protein>
    <recommendedName>
        <fullName evidence="1">Formate--tetrahydrofolate ligase</fullName>
        <ecNumber evidence="1">6.3.4.3</ecNumber>
    </recommendedName>
    <alternativeName>
        <fullName evidence="1">Formyltetrahydrofolate synthetase</fullName>
        <shortName evidence="1">FHS</shortName>
        <shortName evidence="1">FTHFS</shortName>
    </alternativeName>
</protein>
<comment type="catalytic activity">
    <reaction evidence="1">
        <text>(6S)-5,6,7,8-tetrahydrofolate + formate + ATP = (6R)-10-formyltetrahydrofolate + ADP + phosphate</text>
        <dbReference type="Rhea" id="RHEA:20221"/>
        <dbReference type="ChEBI" id="CHEBI:15740"/>
        <dbReference type="ChEBI" id="CHEBI:30616"/>
        <dbReference type="ChEBI" id="CHEBI:43474"/>
        <dbReference type="ChEBI" id="CHEBI:57453"/>
        <dbReference type="ChEBI" id="CHEBI:195366"/>
        <dbReference type="ChEBI" id="CHEBI:456216"/>
        <dbReference type="EC" id="6.3.4.3"/>
    </reaction>
</comment>
<comment type="pathway">
    <text evidence="1">One-carbon metabolism; tetrahydrofolate interconversion.</text>
</comment>
<comment type="similarity">
    <text evidence="1">Belongs to the formate--tetrahydrofolate ligase family.</text>
</comment>
<dbReference type="EC" id="6.3.4.3" evidence="1"/>
<dbReference type="EMBL" id="CP000830">
    <property type="protein sequence ID" value="ABV93025.1"/>
    <property type="molecule type" value="Genomic_DNA"/>
</dbReference>
<dbReference type="RefSeq" id="WP_012177955.1">
    <property type="nucleotide sequence ID" value="NC_009952.1"/>
</dbReference>
<dbReference type="SMR" id="A8LIR1"/>
<dbReference type="STRING" id="398580.Dshi_1283"/>
<dbReference type="KEGG" id="dsh:Dshi_1283"/>
<dbReference type="eggNOG" id="COG2759">
    <property type="taxonomic scope" value="Bacteria"/>
</dbReference>
<dbReference type="HOGENOM" id="CLU_003601_3_3_5"/>
<dbReference type="OrthoDB" id="9761733at2"/>
<dbReference type="UniPathway" id="UPA00193"/>
<dbReference type="Proteomes" id="UP000006833">
    <property type="component" value="Chromosome"/>
</dbReference>
<dbReference type="GO" id="GO:0005524">
    <property type="term" value="F:ATP binding"/>
    <property type="evidence" value="ECO:0007669"/>
    <property type="project" value="UniProtKB-UniRule"/>
</dbReference>
<dbReference type="GO" id="GO:0004329">
    <property type="term" value="F:formate-tetrahydrofolate ligase activity"/>
    <property type="evidence" value="ECO:0007669"/>
    <property type="project" value="UniProtKB-UniRule"/>
</dbReference>
<dbReference type="GO" id="GO:0035999">
    <property type="term" value="P:tetrahydrofolate interconversion"/>
    <property type="evidence" value="ECO:0007669"/>
    <property type="project" value="UniProtKB-UniRule"/>
</dbReference>
<dbReference type="CDD" id="cd00477">
    <property type="entry name" value="FTHFS"/>
    <property type="match status" value="1"/>
</dbReference>
<dbReference type="FunFam" id="3.30.1510.10:FF:000001">
    <property type="entry name" value="Formate--tetrahydrofolate ligase"/>
    <property type="match status" value="1"/>
</dbReference>
<dbReference type="FunFam" id="3.10.410.10:FF:000001">
    <property type="entry name" value="Putative formate--tetrahydrofolate ligase"/>
    <property type="match status" value="1"/>
</dbReference>
<dbReference type="Gene3D" id="3.30.1510.10">
    <property type="entry name" value="Domain 2, N(10)-formyltetrahydrofolate synthetase"/>
    <property type="match status" value="1"/>
</dbReference>
<dbReference type="Gene3D" id="3.10.410.10">
    <property type="entry name" value="Formyltetrahydrofolate synthetase, domain 3"/>
    <property type="match status" value="1"/>
</dbReference>
<dbReference type="Gene3D" id="3.40.50.300">
    <property type="entry name" value="P-loop containing nucleotide triphosphate hydrolases"/>
    <property type="match status" value="1"/>
</dbReference>
<dbReference type="HAMAP" id="MF_01543">
    <property type="entry name" value="FTHFS"/>
    <property type="match status" value="1"/>
</dbReference>
<dbReference type="InterPro" id="IPR000559">
    <property type="entry name" value="Formate_THF_ligase"/>
</dbReference>
<dbReference type="InterPro" id="IPR020628">
    <property type="entry name" value="Formate_THF_ligase_CS"/>
</dbReference>
<dbReference type="InterPro" id="IPR027417">
    <property type="entry name" value="P-loop_NTPase"/>
</dbReference>
<dbReference type="NCBIfam" id="NF010030">
    <property type="entry name" value="PRK13505.1"/>
    <property type="match status" value="1"/>
</dbReference>
<dbReference type="Pfam" id="PF01268">
    <property type="entry name" value="FTHFS"/>
    <property type="match status" value="1"/>
</dbReference>
<dbReference type="SUPFAM" id="SSF52540">
    <property type="entry name" value="P-loop containing nucleoside triphosphate hydrolases"/>
    <property type="match status" value="1"/>
</dbReference>
<dbReference type="PROSITE" id="PS00721">
    <property type="entry name" value="FTHFS_1"/>
    <property type="match status" value="1"/>
</dbReference>
<dbReference type="PROSITE" id="PS00722">
    <property type="entry name" value="FTHFS_2"/>
    <property type="match status" value="1"/>
</dbReference>
<evidence type="ECO:0000255" key="1">
    <source>
        <dbReference type="HAMAP-Rule" id="MF_01543"/>
    </source>
</evidence>
<accession>A8LIR1</accession>
<proteinExistence type="inferred from homology"/>
<organism>
    <name type="scientific">Dinoroseobacter shibae (strain DSM 16493 / NCIMB 14021 / DFL 12)</name>
    <dbReference type="NCBI Taxonomy" id="398580"/>
    <lineage>
        <taxon>Bacteria</taxon>
        <taxon>Pseudomonadati</taxon>
        <taxon>Pseudomonadota</taxon>
        <taxon>Alphaproteobacteria</taxon>
        <taxon>Rhodobacterales</taxon>
        <taxon>Roseobacteraceae</taxon>
        <taxon>Dinoroseobacter</taxon>
    </lineage>
</organism>
<name>FTHS_DINSH</name>
<feature type="chain" id="PRO_0000333315" description="Formate--tetrahydrofolate ligase">
    <location>
        <begin position="1"/>
        <end position="555"/>
    </location>
</feature>
<feature type="binding site" evidence="1">
    <location>
        <begin position="64"/>
        <end position="71"/>
    </location>
    <ligand>
        <name>ATP</name>
        <dbReference type="ChEBI" id="CHEBI:30616"/>
    </ligand>
</feature>
<reference key="1">
    <citation type="journal article" date="2010" name="ISME J.">
        <title>The complete genome sequence of the algal symbiont Dinoroseobacter shibae: a hitchhiker's guide to life in the sea.</title>
        <authorList>
            <person name="Wagner-Dobler I."/>
            <person name="Ballhausen B."/>
            <person name="Berger M."/>
            <person name="Brinkhoff T."/>
            <person name="Buchholz I."/>
            <person name="Bunk B."/>
            <person name="Cypionka H."/>
            <person name="Daniel R."/>
            <person name="Drepper T."/>
            <person name="Gerdts G."/>
            <person name="Hahnke S."/>
            <person name="Han C."/>
            <person name="Jahn D."/>
            <person name="Kalhoefer D."/>
            <person name="Kiss H."/>
            <person name="Klenk H.P."/>
            <person name="Kyrpides N."/>
            <person name="Liebl W."/>
            <person name="Liesegang H."/>
            <person name="Meincke L."/>
            <person name="Pati A."/>
            <person name="Petersen J."/>
            <person name="Piekarski T."/>
            <person name="Pommerenke C."/>
            <person name="Pradella S."/>
            <person name="Pukall R."/>
            <person name="Rabus R."/>
            <person name="Stackebrandt E."/>
            <person name="Thole S."/>
            <person name="Thompson L."/>
            <person name="Tielen P."/>
            <person name="Tomasch J."/>
            <person name="von Jan M."/>
            <person name="Wanphrut N."/>
            <person name="Wichels A."/>
            <person name="Zech H."/>
            <person name="Simon M."/>
        </authorList>
    </citation>
    <scope>NUCLEOTIDE SEQUENCE [LARGE SCALE GENOMIC DNA]</scope>
    <source>
        <strain>DSM 16493 / NCIMB 14021 / DFL 12</strain>
    </source>
</reference>
<gene>
    <name evidence="1" type="primary">fhs</name>
    <name type="ordered locus">Dshi_1283</name>
</gene>